<organism>
    <name type="scientific">Saccharomyces cerevisiae (strain ATCC 204508 / S288c)</name>
    <name type="common">Baker's yeast</name>
    <dbReference type="NCBI Taxonomy" id="559292"/>
    <lineage>
        <taxon>Eukaryota</taxon>
        <taxon>Fungi</taxon>
        <taxon>Dikarya</taxon>
        <taxon>Ascomycota</taxon>
        <taxon>Saccharomycotina</taxon>
        <taxon>Saccharomycetes</taxon>
        <taxon>Saccharomycetales</taxon>
        <taxon>Saccharomycetaceae</taxon>
        <taxon>Saccharomyces</taxon>
    </lineage>
</organism>
<feature type="chain" id="PRO_0000080062" description="Adenosine kinase">
    <location>
        <begin position="1"/>
        <end position="340"/>
    </location>
</feature>
<feature type="active site" evidence="1">
    <location>
        <position position="293"/>
    </location>
</feature>
<evidence type="ECO:0000250" key="1"/>
<evidence type="ECO:0000269" key="2">
    <source>
    </source>
</evidence>
<evidence type="ECO:0000269" key="3">
    <source>
    </source>
</evidence>
<evidence type="ECO:0000269" key="4">
    <source>
    </source>
</evidence>
<evidence type="ECO:0000303" key="5">
    <source>
    </source>
</evidence>
<evidence type="ECO:0000305" key="6"/>
<dbReference type="EC" id="2.7.1.20" evidence="2"/>
<dbReference type="EMBL" id="Z49605">
    <property type="protein sequence ID" value="CAA89635.1"/>
    <property type="molecule type" value="Genomic_DNA"/>
</dbReference>
<dbReference type="EMBL" id="AY558082">
    <property type="protein sequence ID" value="AAS56408.1"/>
    <property type="molecule type" value="Genomic_DNA"/>
</dbReference>
<dbReference type="EMBL" id="BK006943">
    <property type="protein sequence ID" value="DAA08890.1"/>
    <property type="molecule type" value="Genomic_DNA"/>
</dbReference>
<dbReference type="PIR" id="S57126">
    <property type="entry name" value="S57126"/>
</dbReference>
<dbReference type="RefSeq" id="NP_012639.1">
    <property type="nucleotide sequence ID" value="NM_001181763.1"/>
</dbReference>
<dbReference type="SMR" id="P47143"/>
<dbReference type="BioGRID" id="33861">
    <property type="interactions" value="256"/>
</dbReference>
<dbReference type="DIP" id="DIP-4681N"/>
<dbReference type="FunCoup" id="P47143">
    <property type="interactions" value="1567"/>
</dbReference>
<dbReference type="IntAct" id="P47143">
    <property type="interactions" value="5"/>
</dbReference>
<dbReference type="MINT" id="P47143"/>
<dbReference type="STRING" id="4932.YJR105W"/>
<dbReference type="iPTMnet" id="P47143"/>
<dbReference type="PaxDb" id="4932-YJR105W"/>
<dbReference type="PeptideAtlas" id="P47143"/>
<dbReference type="EnsemblFungi" id="YJR105W_mRNA">
    <property type="protein sequence ID" value="YJR105W"/>
    <property type="gene ID" value="YJR105W"/>
</dbReference>
<dbReference type="GeneID" id="853569"/>
<dbReference type="KEGG" id="sce:YJR105W"/>
<dbReference type="AGR" id="SGD:S000003866"/>
<dbReference type="SGD" id="S000003866">
    <property type="gene designation" value="ADO1"/>
</dbReference>
<dbReference type="VEuPathDB" id="FungiDB:YJR105W"/>
<dbReference type="eggNOG" id="KOG2854">
    <property type="taxonomic scope" value="Eukaryota"/>
</dbReference>
<dbReference type="GeneTree" id="ENSGT00390000014320"/>
<dbReference type="HOGENOM" id="CLU_045832_1_0_1"/>
<dbReference type="InParanoid" id="P47143"/>
<dbReference type="OMA" id="RTMCTYL"/>
<dbReference type="OrthoDB" id="432447at2759"/>
<dbReference type="BioCyc" id="YEAST:YJR105W-MONOMER"/>
<dbReference type="Reactome" id="R-SCE-74217">
    <property type="pathway name" value="Purine salvage"/>
</dbReference>
<dbReference type="Reactome" id="R-SCE-9755088">
    <property type="pathway name" value="Ribavirin ADME"/>
</dbReference>
<dbReference type="UniPathway" id="UPA00588">
    <property type="reaction ID" value="UER00659"/>
</dbReference>
<dbReference type="BioGRID-ORCS" id="853569">
    <property type="hits" value="10 hits in 10 CRISPR screens"/>
</dbReference>
<dbReference type="PRO" id="PR:P47143"/>
<dbReference type="Proteomes" id="UP000002311">
    <property type="component" value="Chromosome X"/>
</dbReference>
<dbReference type="RNAct" id="P47143">
    <property type="molecule type" value="protein"/>
</dbReference>
<dbReference type="GO" id="GO:0005737">
    <property type="term" value="C:cytoplasm"/>
    <property type="evidence" value="ECO:0007005"/>
    <property type="project" value="SGD"/>
</dbReference>
<dbReference type="GO" id="GO:0005829">
    <property type="term" value="C:cytosol"/>
    <property type="evidence" value="ECO:0000318"/>
    <property type="project" value="GO_Central"/>
</dbReference>
<dbReference type="GO" id="GO:0005634">
    <property type="term" value="C:nucleus"/>
    <property type="evidence" value="ECO:0007005"/>
    <property type="project" value="SGD"/>
</dbReference>
<dbReference type="GO" id="GO:0004001">
    <property type="term" value="F:adenosine kinase activity"/>
    <property type="evidence" value="ECO:0000314"/>
    <property type="project" value="SGD"/>
</dbReference>
<dbReference type="GO" id="GO:0005524">
    <property type="term" value="F:ATP binding"/>
    <property type="evidence" value="ECO:0007669"/>
    <property type="project" value="UniProtKB-KW"/>
</dbReference>
<dbReference type="GO" id="GO:0044209">
    <property type="term" value="P:AMP salvage"/>
    <property type="evidence" value="ECO:0007669"/>
    <property type="project" value="UniProtKB-UniPathway"/>
</dbReference>
<dbReference type="GO" id="GO:0006144">
    <property type="term" value="P:purine nucleobase metabolic process"/>
    <property type="evidence" value="ECO:0000315"/>
    <property type="project" value="SGD"/>
</dbReference>
<dbReference type="GO" id="GO:0006166">
    <property type="term" value="P:purine ribonucleoside salvage"/>
    <property type="evidence" value="ECO:0007669"/>
    <property type="project" value="UniProtKB-KW"/>
</dbReference>
<dbReference type="CDD" id="cd01168">
    <property type="entry name" value="adenosine_kinase"/>
    <property type="match status" value="1"/>
</dbReference>
<dbReference type="Gene3D" id="3.30.1110.10">
    <property type="match status" value="1"/>
</dbReference>
<dbReference type="Gene3D" id="3.40.1190.20">
    <property type="match status" value="1"/>
</dbReference>
<dbReference type="InterPro" id="IPR001805">
    <property type="entry name" value="Adenokinase"/>
</dbReference>
<dbReference type="InterPro" id="IPR002173">
    <property type="entry name" value="Carboh/pur_kinase_PfkB_CS"/>
</dbReference>
<dbReference type="InterPro" id="IPR011611">
    <property type="entry name" value="PfkB_dom"/>
</dbReference>
<dbReference type="InterPro" id="IPR029056">
    <property type="entry name" value="Ribokinase-like"/>
</dbReference>
<dbReference type="PANTHER" id="PTHR45769">
    <property type="entry name" value="ADENOSINE KINASE"/>
    <property type="match status" value="1"/>
</dbReference>
<dbReference type="PANTHER" id="PTHR45769:SF3">
    <property type="entry name" value="ADENOSINE KINASE"/>
    <property type="match status" value="1"/>
</dbReference>
<dbReference type="Pfam" id="PF00294">
    <property type="entry name" value="PfkB"/>
    <property type="match status" value="1"/>
</dbReference>
<dbReference type="PRINTS" id="PR00989">
    <property type="entry name" value="ADENOKINASE"/>
</dbReference>
<dbReference type="SUPFAM" id="SSF53613">
    <property type="entry name" value="Ribokinase-like"/>
    <property type="match status" value="1"/>
</dbReference>
<dbReference type="PROSITE" id="PS00584">
    <property type="entry name" value="PFKB_KINASES_2"/>
    <property type="match status" value="1"/>
</dbReference>
<gene>
    <name evidence="5" type="primary">ADO1</name>
    <name type="ordered locus">YJR105W</name>
    <name type="ORF">J1973</name>
</gene>
<protein>
    <recommendedName>
        <fullName evidence="5">Adenosine kinase</fullName>
        <ecNumber evidence="2">2.7.1.20</ecNumber>
    </recommendedName>
</protein>
<name>ADK_YEAST</name>
<accession>P47143</accession>
<accession>D6VWS4</accession>
<reference key="1">
    <citation type="journal article" date="1996" name="EMBO J.">
        <title>Complete nucleotide sequence of Saccharomyces cerevisiae chromosome X.</title>
        <authorList>
            <person name="Galibert F."/>
            <person name="Alexandraki D."/>
            <person name="Baur A."/>
            <person name="Boles E."/>
            <person name="Chalwatzis N."/>
            <person name="Chuat J.-C."/>
            <person name="Coster F."/>
            <person name="Cziepluch C."/>
            <person name="de Haan M."/>
            <person name="Domdey H."/>
            <person name="Durand P."/>
            <person name="Entian K.-D."/>
            <person name="Gatius M."/>
            <person name="Goffeau A."/>
            <person name="Grivell L.A."/>
            <person name="Hennemann A."/>
            <person name="Herbert C.J."/>
            <person name="Heumann K."/>
            <person name="Hilger F."/>
            <person name="Hollenberg C.P."/>
            <person name="Huang M.-E."/>
            <person name="Jacq C."/>
            <person name="Jauniaux J.-C."/>
            <person name="Katsoulou C."/>
            <person name="Kirchrath L."/>
            <person name="Kleine K."/>
            <person name="Kordes E."/>
            <person name="Koetter P."/>
            <person name="Liebl S."/>
            <person name="Louis E.J."/>
            <person name="Manus V."/>
            <person name="Mewes H.-W."/>
            <person name="Miosga T."/>
            <person name="Obermaier B."/>
            <person name="Perea J."/>
            <person name="Pohl T.M."/>
            <person name="Portetelle D."/>
            <person name="Pujol A."/>
            <person name="Purnelle B."/>
            <person name="Ramezani Rad M."/>
            <person name="Rasmussen S.W."/>
            <person name="Rose M."/>
            <person name="Rossau R."/>
            <person name="Schaaff-Gerstenschlaeger I."/>
            <person name="Smits P.H.M."/>
            <person name="Scarcez T."/>
            <person name="Soriano N."/>
            <person name="To Van D."/>
            <person name="Tzermia M."/>
            <person name="Van Broekhoven A."/>
            <person name="Vandenbol M."/>
            <person name="Wedler H."/>
            <person name="von Wettstein D."/>
            <person name="Wambutt R."/>
            <person name="Zagulski M."/>
            <person name="Zollner A."/>
            <person name="Karpfinger-Hartl L."/>
        </authorList>
    </citation>
    <scope>NUCLEOTIDE SEQUENCE [LARGE SCALE GENOMIC DNA]</scope>
    <source>
        <strain>ATCC 204508 / S288c</strain>
    </source>
</reference>
<reference key="2">
    <citation type="journal article" date="2014" name="G3 (Bethesda)">
        <title>The reference genome sequence of Saccharomyces cerevisiae: Then and now.</title>
        <authorList>
            <person name="Engel S.R."/>
            <person name="Dietrich F.S."/>
            <person name="Fisk D.G."/>
            <person name="Binkley G."/>
            <person name="Balakrishnan R."/>
            <person name="Costanzo M.C."/>
            <person name="Dwight S.S."/>
            <person name="Hitz B.C."/>
            <person name="Karra K."/>
            <person name="Nash R.S."/>
            <person name="Weng S."/>
            <person name="Wong E.D."/>
            <person name="Lloyd P."/>
            <person name="Skrzypek M.S."/>
            <person name="Miyasato S.R."/>
            <person name="Simison M."/>
            <person name="Cherry J.M."/>
        </authorList>
    </citation>
    <scope>GENOME REANNOTATION</scope>
    <source>
        <strain>ATCC 204508 / S288c</strain>
    </source>
</reference>
<reference key="3">
    <citation type="journal article" date="2007" name="Genome Res.">
        <title>Approaching a complete repository of sequence-verified protein-encoding clones for Saccharomyces cerevisiae.</title>
        <authorList>
            <person name="Hu Y."/>
            <person name="Rolfs A."/>
            <person name="Bhullar B."/>
            <person name="Murthy T.V.S."/>
            <person name="Zhu C."/>
            <person name="Berger M.F."/>
            <person name="Camargo A.A."/>
            <person name="Kelley F."/>
            <person name="McCarron S."/>
            <person name="Jepson D."/>
            <person name="Richardson A."/>
            <person name="Raphael J."/>
            <person name="Moreira D."/>
            <person name="Taycher E."/>
            <person name="Zuo D."/>
            <person name="Mohr S."/>
            <person name="Kane M.F."/>
            <person name="Williamson J."/>
            <person name="Simpson A.J.G."/>
            <person name="Bulyk M.L."/>
            <person name="Harlow E."/>
            <person name="Marsischky G."/>
            <person name="Kolodner R.D."/>
            <person name="LaBaer J."/>
        </authorList>
    </citation>
    <scope>NUCLEOTIDE SEQUENCE [GENOMIC DNA]</scope>
    <source>
        <strain>ATCC 204508 / S288c</strain>
    </source>
</reference>
<reference key="4">
    <citation type="journal article" date="2001" name="Yeast">
        <title>Role of adenosine kinase in Saccharomyces cerevisiae: identification of the ADO1 gene and study of the mutant phenotypes.</title>
        <authorList>
            <person name="Lecoq K."/>
            <person name="Belloc I."/>
            <person name="Desgranges C."/>
            <person name="Daignan-Fornier B."/>
        </authorList>
    </citation>
    <scope>FUNCTION</scope>
    <scope>DISRUPTION PHENOTYPE</scope>
    <scope>CATALYTIC ACTIVITY</scope>
</reference>
<reference key="5">
    <citation type="journal article" date="2003" name="Nature">
        <title>Global analysis of protein expression in yeast.</title>
        <authorList>
            <person name="Ghaemmaghami S."/>
            <person name="Huh W.-K."/>
            <person name="Bower K."/>
            <person name="Howson R.W."/>
            <person name="Belle A."/>
            <person name="Dephoure N."/>
            <person name="O'Shea E.K."/>
            <person name="Weissman J.S."/>
        </authorList>
    </citation>
    <scope>LEVEL OF PROTEIN EXPRESSION [LARGE SCALE ANALYSIS]</scope>
</reference>
<reference key="6">
    <citation type="journal article" date="2003" name="Yeast">
        <title>Expression in Escherichia coli of a recombinant adenosine kinase from Saccharomyces cerevisiae: purification, kinetics and substrate analyses.</title>
        <authorList>
            <person name="Barrado P."/>
            <person name="Rodriguez M.J."/>
            <person name="Jimenez A."/>
            <person name="Lobato M.F."/>
        </authorList>
    </citation>
    <scope>FUNCTION</scope>
    <scope>CATALYTIC ACTIVITY</scope>
    <scope>BIOPHYSICOCHEMICAL PROPERTIES</scope>
</reference>
<sequence>MTAPLVVLGNPLLDFQADVTAEYLAKYSLKENDAILVDAKSGDAKMAIFDELLQMPETKLVAGGAAQNTARGAAYVLGAGQVVYFGSVGKDKFSERLLNENEKAGVKSMYQVQNDIGTGKCAALITGHNRSLVTDLGAANFFTPDHLDKHWDLVEAAKLFYIGGFHLTVSPDAIVKLGQHAKENSKPFVLNFSAPFIPHVFKDALARVLPYATVIIANESEAEAFCDAFQLDCANTDLEAIAQRIVKDSPVEKTVIFTHGVEPTVVVSSKGTSTYPVKPLDSSKIVDTNGAGDAFAGGFMAGLTKGEDLETSIDMGQWLAALSIQEVGPSYPSEKISYSK</sequence>
<comment type="function">
    <text>ATP dependent phosphorylation of adenosine and other related nucleoside analogs to monophosphate derivatives. ADO1 does not play a major role in adenine utilization in yeast. Its physiological role could primarily be to recycle adenosine produced by the methyl cycle.</text>
</comment>
<comment type="catalytic activity">
    <reaction>
        <text>adenosine + ATP = AMP + ADP + H(+)</text>
        <dbReference type="Rhea" id="RHEA:20824"/>
        <dbReference type="ChEBI" id="CHEBI:15378"/>
        <dbReference type="ChEBI" id="CHEBI:16335"/>
        <dbReference type="ChEBI" id="CHEBI:30616"/>
        <dbReference type="ChEBI" id="CHEBI:456215"/>
        <dbReference type="ChEBI" id="CHEBI:456216"/>
        <dbReference type="EC" id="2.7.1.20"/>
    </reaction>
</comment>
<comment type="cofactor">
    <cofactor evidence="1">
        <name>Mg(2+)</name>
        <dbReference type="ChEBI" id="CHEBI:18420"/>
    </cofactor>
</comment>
<comment type="biophysicochemical properties">
    <kinetics>
        <KM evidence="3">0.84 mM for ATP</KM>
        <KM evidence="3">0.003 mM for adenosine</KM>
        <KM evidence="3">1.84 mM for 3'-deoxyadenosine</KM>
        <KM evidence="3">0.26 mM for 3'-amino-3'-deoxyadenosine</KM>
        <Vmax evidence="3">0.18 mmol/min/mg enzyme towards ATP</Vmax>
        <Vmax evidence="3">0.17 mmol/min/mg enzyme towards adenosine</Vmax>
        <Vmax evidence="3">0.71 umol/min/mg enzyme towards 3'-deoxyadenosine</Vmax>
        <Vmax evidence="3">0.06 mmol/min/mg enzyme towards 3'-amino-3'-deoxyadenosine</Vmax>
    </kinetics>
</comment>
<comment type="pathway">
    <text>Purine metabolism; AMP biosynthesis via salvage pathway; AMP from adenosine: step 1/1.</text>
</comment>
<comment type="disruption phenotype">
    <text evidence="2">Results in a severe reduction of adenosine kinase activity.</text>
</comment>
<comment type="miscellaneous">
    <text evidence="4">Present with 22200 molecules/cell in log phase SD medium.</text>
</comment>
<comment type="similarity">
    <text evidence="6">Belongs to the carbohydrate kinase PfkB family.</text>
</comment>
<keyword id="KW-0067">ATP-binding</keyword>
<keyword id="KW-0418">Kinase</keyword>
<keyword id="KW-0547">Nucleotide-binding</keyword>
<keyword id="KW-0660">Purine salvage</keyword>
<keyword id="KW-1185">Reference proteome</keyword>
<keyword id="KW-0808">Transferase</keyword>
<proteinExistence type="evidence at protein level"/>